<dbReference type="EMBL" id="AE016795">
    <property type="protein sequence ID" value="AAO09644.1"/>
    <property type="molecule type" value="Genomic_DNA"/>
</dbReference>
<dbReference type="RefSeq" id="WP_011079183.1">
    <property type="nucleotide sequence ID" value="NC_004459.3"/>
</dbReference>
<dbReference type="SMR" id="Q8DD41"/>
<dbReference type="KEGG" id="vvu:VV1_1173"/>
<dbReference type="HOGENOM" id="CLU_008287_18_0_6"/>
<dbReference type="Proteomes" id="UP000002275">
    <property type="component" value="Chromosome 1"/>
</dbReference>
<dbReference type="GO" id="GO:0009279">
    <property type="term" value="C:cell outer membrane"/>
    <property type="evidence" value="ECO:0007669"/>
    <property type="project" value="UniProtKB-SubCell"/>
</dbReference>
<dbReference type="GO" id="GO:0046930">
    <property type="term" value="C:pore complex"/>
    <property type="evidence" value="ECO:0007669"/>
    <property type="project" value="UniProtKB-KW"/>
</dbReference>
<dbReference type="GO" id="GO:0015420">
    <property type="term" value="F:ABC-type vitamin B12 transporter activity"/>
    <property type="evidence" value="ECO:0007669"/>
    <property type="project" value="InterPro"/>
</dbReference>
<dbReference type="GO" id="GO:0015288">
    <property type="term" value="F:porin activity"/>
    <property type="evidence" value="ECO:0007669"/>
    <property type="project" value="UniProtKB-KW"/>
</dbReference>
<dbReference type="GO" id="GO:0006811">
    <property type="term" value="P:monoatomic ion transport"/>
    <property type="evidence" value="ECO:0007669"/>
    <property type="project" value="UniProtKB-KW"/>
</dbReference>
<dbReference type="CDD" id="cd01347">
    <property type="entry name" value="ligand_gated_channel"/>
    <property type="match status" value="1"/>
</dbReference>
<dbReference type="Gene3D" id="2.40.170.20">
    <property type="entry name" value="TonB-dependent receptor, beta-barrel domain"/>
    <property type="match status" value="1"/>
</dbReference>
<dbReference type="Gene3D" id="2.170.130.10">
    <property type="entry name" value="TonB-dependent receptor, plug domain"/>
    <property type="match status" value="1"/>
</dbReference>
<dbReference type="HAMAP" id="MF_01531">
    <property type="entry name" value="BtuB"/>
    <property type="match status" value="1"/>
</dbReference>
<dbReference type="InterPro" id="IPR010101">
    <property type="entry name" value="B12_transptr_BtuB"/>
</dbReference>
<dbReference type="InterPro" id="IPR012910">
    <property type="entry name" value="Plug_dom"/>
</dbReference>
<dbReference type="InterPro" id="IPR037066">
    <property type="entry name" value="Plug_dom_sf"/>
</dbReference>
<dbReference type="InterPro" id="IPR039426">
    <property type="entry name" value="TonB-dep_rcpt-like"/>
</dbReference>
<dbReference type="InterPro" id="IPR000531">
    <property type="entry name" value="TonB-dep_rcpt_b-brl"/>
</dbReference>
<dbReference type="InterPro" id="IPR010916">
    <property type="entry name" value="TonB_box_CS"/>
</dbReference>
<dbReference type="InterPro" id="IPR036942">
    <property type="entry name" value="TonB_rcpt_b-brl_sf"/>
</dbReference>
<dbReference type="InterPro" id="IPR010917">
    <property type="entry name" value="TonB_rcpt_CS"/>
</dbReference>
<dbReference type="PANTHER" id="PTHR30069:SF53">
    <property type="entry name" value="COLICIN I RECEPTOR-RELATED"/>
    <property type="match status" value="1"/>
</dbReference>
<dbReference type="PANTHER" id="PTHR30069">
    <property type="entry name" value="TONB-DEPENDENT OUTER MEMBRANE RECEPTOR"/>
    <property type="match status" value="1"/>
</dbReference>
<dbReference type="Pfam" id="PF07715">
    <property type="entry name" value="Plug"/>
    <property type="match status" value="1"/>
</dbReference>
<dbReference type="Pfam" id="PF00593">
    <property type="entry name" value="TonB_dep_Rec_b-barrel"/>
    <property type="match status" value="1"/>
</dbReference>
<dbReference type="SUPFAM" id="SSF56935">
    <property type="entry name" value="Porins"/>
    <property type="match status" value="1"/>
</dbReference>
<dbReference type="PROSITE" id="PS00430">
    <property type="entry name" value="TONB_DEPENDENT_REC_1"/>
    <property type="match status" value="1"/>
</dbReference>
<dbReference type="PROSITE" id="PS01156">
    <property type="entry name" value="TONB_DEPENDENT_REC_2"/>
    <property type="match status" value="1"/>
</dbReference>
<dbReference type="PROSITE" id="PS52016">
    <property type="entry name" value="TONB_DEPENDENT_REC_3"/>
    <property type="match status" value="1"/>
</dbReference>
<keyword id="KW-0998">Cell outer membrane</keyword>
<keyword id="KW-0406">Ion transport</keyword>
<keyword id="KW-0472">Membrane</keyword>
<keyword id="KW-0626">Porin</keyword>
<keyword id="KW-0732">Signal</keyword>
<keyword id="KW-0798">TonB box</keyword>
<keyword id="KW-0812">Transmembrane</keyword>
<keyword id="KW-1134">Transmembrane beta strand</keyword>
<keyword id="KW-0813">Transport</keyword>
<protein>
    <recommendedName>
        <fullName evidence="1">Vitamin B12 transporter BtuB</fullName>
    </recommendedName>
    <alternativeName>
        <fullName evidence="1">Cobalamin receptor</fullName>
    </alternativeName>
    <alternativeName>
        <fullName evidence="1">Outer membrane cobalamin translocator</fullName>
    </alternativeName>
</protein>
<gene>
    <name evidence="1" type="primary">btuB</name>
    <name type="ordered locus">VV1_1173</name>
</gene>
<proteinExistence type="inferred from homology"/>
<feature type="signal peptide" evidence="1">
    <location>
        <begin position="1"/>
        <end position="22"/>
    </location>
</feature>
<feature type="chain" id="PRO_0000003493" description="Vitamin B12 transporter BtuB">
    <location>
        <begin position="23"/>
        <end position="606"/>
    </location>
</feature>
<feature type="domain" description="TBDR plug" evidence="2">
    <location>
        <begin position="41"/>
        <end position="153"/>
    </location>
</feature>
<feature type="domain" description="TBDR beta-barrel" evidence="2">
    <location>
        <begin position="158"/>
        <end position="606"/>
    </location>
</feature>
<feature type="short sequence motif" description="TonB box">
    <location>
        <begin position="29"/>
        <end position="36"/>
    </location>
</feature>
<feature type="short sequence motif" description="TonB C-terminal box">
    <location>
        <begin position="589"/>
        <end position="606"/>
    </location>
</feature>
<evidence type="ECO:0000255" key="1">
    <source>
        <dbReference type="HAMAP-Rule" id="MF_01531"/>
    </source>
</evidence>
<evidence type="ECO:0000255" key="2">
    <source>
        <dbReference type="PROSITE-ProRule" id="PRU01360"/>
    </source>
</evidence>
<organism>
    <name type="scientific">Vibrio vulnificus (strain CMCP6)</name>
    <dbReference type="NCBI Taxonomy" id="216895"/>
    <lineage>
        <taxon>Bacteria</taxon>
        <taxon>Pseudomonadati</taxon>
        <taxon>Pseudomonadota</taxon>
        <taxon>Gammaproteobacteria</taxon>
        <taxon>Vibrionales</taxon>
        <taxon>Vibrionaceae</taxon>
        <taxon>Vibrio</taxon>
    </lineage>
</organism>
<sequence>MQKSLLAIAMASLLTPVSYLHAQEVQTNDTVVVTANRFEQPLAEVIASTTVISKQEIEETQAKSLLDVLKRVPGIEVSQSGGRGHSASVFIRGFNSNQVLFLVDGVRINSAAGGISFNHIPVGIIERVEVIKGPGGALYGSDAIAGVINVITTSSESSEGSVVSLGAGSDAQKEANFSTTRAFANGGVLKLAGGFEETEGFDIKDPETGLNYGYESQNLFASYSQAFNDEFSGSASVRWYDSLTEYDSGGKNYGYSENLSITADVQYSGSRLSSTLRANQQAIENLDYSQAEGKDNAGTVKKIALTNLQFLNQYLISEGITIGAGADWRKEKLDDDALSYGYPDKLAGESRSTTGVYLSTDLQLGDLQVTGSVRNDKHDTYDNYRTWSLGTRYQITESHSVRATFGTSFKAPSYSDLTNNPDLKPEEAMSREIGYTGEFALFTVDVAAYDNDVDNLIIWYEGSPWWYPENVDATLKGLEITGYFNTWFVHHTVVAEFKDHQDSGGNKLAKRADENYKWLMDASYENFDVNLTYTYTGERLGNPKEVSDPKNELPSVSLWDASVGYWISPDLVVRARVDNLTNEKYQTTLSYNAPERRYFANLTYQF</sequence>
<reference key="1">
    <citation type="submission" date="2002-12" db="EMBL/GenBank/DDBJ databases">
        <title>Complete genome sequence of Vibrio vulnificus CMCP6.</title>
        <authorList>
            <person name="Rhee J.H."/>
            <person name="Kim S.Y."/>
            <person name="Chung S.S."/>
            <person name="Kim J.J."/>
            <person name="Moon Y.H."/>
            <person name="Jeong H."/>
            <person name="Choy H.E."/>
        </authorList>
    </citation>
    <scope>NUCLEOTIDE SEQUENCE [LARGE SCALE GENOMIC DNA]</scope>
    <source>
        <strain>CMCP6</strain>
    </source>
</reference>
<accession>Q8DD41</accession>
<comment type="function">
    <text evidence="1">Involved in the active translocation of vitamin B12 (cyanocobalamin) across the outer membrane to the periplasmic space. It derives its energy for transport by interacting with the trans-periplasmic membrane protein TonB.</text>
</comment>
<comment type="subcellular location">
    <subcellularLocation>
        <location evidence="1">Cell outer membrane</location>
        <topology evidence="1">Multi-pass membrane protein</topology>
    </subcellularLocation>
</comment>
<comment type="similarity">
    <text evidence="1">Belongs to the TonB-dependent receptor family. BtuB (TC 1.B.14.3.1) subfamily.</text>
</comment>
<name>BTUB_VIBVU</name>